<organism>
    <name type="scientific">Mus musculus</name>
    <name type="common">Mouse</name>
    <dbReference type="NCBI Taxonomy" id="10090"/>
    <lineage>
        <taxon>Eukaryota</taxon>
        <taxon>Metazoa</taxon>
        <taxon>Chordata</taxon>
        <taxon>Craniata</taxon>
        <taxon>Vertebrata</taxon>
        <taxon>Euteleostomi</taxon>
        <taxon>Mammalia</taxon>
        <taxon>Eutheria</taxon>
        <taxon>Euarchontoglires</taxon>
        <taxon>Glires</taxon>
        <taxon>Rodentia</taxon>
        <taxon>Myomorpha</taxon>
        <taxon>Muroidea</taxon>
        <taxon>Muridae</taxon>
        <taxon>Murinae</taxon>
        <taxon>Mus</taxon>
        <taxon>Mus</taxon>
    </lineage>
</organism>
<proteinExistence type="evidence at protein level"/>
<comment type="function">
    <text evidence="5 6 8 9">RNA-binding protein that function as a pre-mRNA splicing factor. Plays a critical role in both constitutive and enhancer-dependent splicing by mediating protein-protein interactions and protein-RNA interactions required for accurate 3'-splice site selection. It can functionally substitute for U2AF1 in constitutive splicing and enhancer-dependent splicing. Acts by enhancing the binding of U2AF2 to weak pyrimidine tracts. Also participates in the regulation of alternative pre-mRNA splicing. Activates exon 5 skipping of PTPRC during T-cell activation; an event reversed by GFI1. Binds to RNA at the AG dinucleotide at the 3'-splice site. Shows a preference for AGC or AGA (PubMed:11739736, PubMed:16819553, PubMed:18460468). Alternative splicing of U2AF1L4 may play a role in connecting the circadian rhythm to changing external cues: may provide a circadian buffering system in central and periphery clocks that allows synchronized adaption to clock-resetting stimuli in order to prevent potentially pathogenic desynchronization (PubMed:24837677).</text>
</comment>
<comment type="subunit">
    <text evidence="5 6 7 8">Interacts with GFI1, U2AF2 and C1QBP. Isoform 3 interacts with PER1.</text>
</comment>
<comment type="interaction">
    <interactant intactId="EBI-4288480">
        <id>Q8BGJ9</id>
    </interactant>
    <interactant intactId="EBI-642072">
        <id>O35658</id>
        <label>C1qbp</label>
    </interactant>
    <organismsDiffer>false</organismsDiffer>
    <experiments>4</experiments>
</comment>
<comment type="interaction">
    <interactant intactId="EBI-4288480">
        <id>Q8BGJ9</id>
    </interactant>
    <interactant intactId="EBI-3954754">
        <id>P70338</id>
        <label>Gfi1</label>
    </interactant>
    <organismsDiffer>false</organismsDiffer>
    <experiments>5</experiments>
</comment>
<comment type="subcellular location">
    <molecule>Isoform 1</molecule>
    <subcellularLocation>
        <location evidence="5 7">Nucleus</location>
    </subcellularLocation>
    <subcellularLocation>
        <location evidence="5">Nucleus speckle</location>
    </subcellularLocation>
    <subcellularLocation>
        <location evidence="6 7 8">Cytoplasm</location>
    </subcellularLocation>
    <text evidence="7">Interaction with C1QBP is required for the nuclear translocation. Displays active nucleo-cytoplasmic shuttling.</text>
</comment>
<comment type="subcellular location">
    <molecule>Isoform 3</molecule>
    <subcellularLocation>
        <location evidence="7 8">Cytoplasm</location>
    </subcellularLocation>
</comment>
<comment type="subcellular location">
    <molecule>Isoform 2</molecule>
    <subcellularLocation>
        <location evidence="7">Cytoplasm</location>
    </subcellularLocation>
</comment>
<comment type="alternative products">
    <event type="alternative splicing"/>
    <isoform>
        <id>Q8BGJ9-1</id>
        <name>1</name>
        <name evidence="10">fl</name>
        <sequence type="displayed"/>
    </isoform>
    <isoform>
        <id>Q8BGJ9-2</id>
        <name>2</name>
        <name>U2AF26DeltaE7</name>
        <name evidence="9 10">DE7</name>
        <sequence type="described" ref="VSP_056877"/>
    </isoform>
    <isoform>
        <id>Q8BGJ9-3</id>
        <name>3</name>
        <name>U2AF26DeltaE67</name>
        <name evidence="9 10">DE67</name>
        <sequence type="described" ref="VSP_056875"/>
    </isoform>
    <isoform>
        <id>Q8BGJ9-4</id>
        <name>4</name>
        <sequence type="described" ref="VSP_056874 VSP_056876"/>
    </isoform>
    <text>Circadian and light-inducible alternative splicing, which occurs at least in brain and liver.</text>
</comment>
<comment type="tissue specificity">
    <text evidence="5">Ubiquitous. Highly expressed in the brain.</text>
</comment>
<comment type="induction">
    <text evidence="6 8">Up-regulated in response to T-cell activation (at protein level) (PubMed:16819553). Circadian alternative splicing switch accounts for rhythmic isoform expression. A circadian splicing switch produces isoform 3 in the brain cerebellum and liver (at protein level). Isoform 3 expression is regulated with the circadian rhythm but is also quickly increased upon light exposure (4-8 hours after light exposure). Expression of isoform 3 changes approximately 5-fold across a period of 24 hours, with concomitant changes in isoform 1, resulting in total U2af1l4 remaining constant (PubMed:24837677).</text>
</comment>
<comment type="domain">
    <text>The second zinc finger in necessary for interaction with GFI1 and for alternative pre-mRNA splicing events.</text>
</comment>
<comment type="domain">
    <text evidence="7">The region 162-220 is essential for the nuclear import of the protein in spite of the absence of a nuclear localization signal (NLS). This region is essential for the interaction with C1QBP, interaction which is required for the nuclear translocation. This region may be involved in the localization in nuclear dot-like structures and it also confers the ability of nucleo-cytoplasmic shuttling.</text>
</comment>
<comment type="domain">
    <text evidence="8">Isoform 3 contains a C-terminus domain with homology to Drosophila TIM (THD domain). Isoform 3 interacts with Per1 and specifically down-regulates its expression, probably by facilitating its recruitment to the proteasome. The interaction with PER1 depends on the presence of the THD domain, but the THD domain is not directly involved in the interaction.</text>
</comment>
<comment type="PTM">
    <text evidence="8">Isoform 3 is rapidly degraded by a proteasome-mediated degradation pathway.</text>
</comment>
<comment type="disruption phenotype">
    <text evidence="8">Mutant mice show defects in circadian gene expression and jet lag phenotype, but the master clock is not strongly affected. Per2 expression is rhythmic, but Per1 expression becomes nearly arrhythmic as well as Per1 target genes, such as Dbp. No splicing alteration was observed in the brain. Mutant mice show a faster adaptation to experimental jet lag, which is consistent with the circadian splicing switch providing a buffering system against sudden light changes.</text>
</comment>
<comment type="miscellaneous">
    <molecule>Isoform 1</molecule>
    <text evidence="6 7 8">Cytoplasmic and nuclear. Displays active nucleo-cytoplasmic shuttling. Shows a circadian expression at the mRNA level.</text>
</comment>
<comment type="miscellaneous">
    <molecule>Isoform 2</molecule>
    <text evidence="6 7">Produced by exon 7 skipping. Cytoplasm (PubMed:16819553). Shows a circadian expression at the mRNA level.</text>
</comment>
<comment type="miscellaneous">
    <molecule>Isoform 3</molecule>
    <text evidence="8">Produced by exons 6 and 7 skipping. Produced by a circadian splicing switch in brain and liver. Contains a C-terminus domain with homology to Drosophila TIM (THD). Cytoplasmic. Shows a circadian expression at the mRNA and protein levels. Expression is quickly increased upon light exposure. Has a strongly reduced half-life compared to other isoforms.</text>
</comment>
<comment type="miscellaneous">
    <molecule>Isoform 4</molecule>
    <text evidence="8">Produced by usage of an alternative 3' splice site in exon 8.</text>
</comment>
<comment type="similarity">
    <text evidence="11">Belongs to the splicing factor SR family.</text>
</comment>
<comment type="caution">
    <text evidence="12">Orthologs of U2af1l4 do not appear to exist in lower eukaryotes, Drosophila, C.elegans, plants, or vertebrates such as Xenopus or zebrafish (PubMed:11739736). Existence of splicing isoforms of U2af1l4 in human and rat is not yet proven.</text>
</comment>
<name>U2AF4_MOUSE</name>
<feature type="initiator methionine" description="Removed" evidence="1">
    <location>
        <position position="1"/>
    </location>
</feature>
<feature type="chain" id="PRO_0000309741" description="Splicing factor U2AF 26 kDa subunit">
    <location>
        <begin position="2"/>
        <end position="220"/>
    </location>
</feature>
<feature type="domain" description="RRM" evidence="2">
    <location>
        <begin position="65"/>
        <end position="147"/>
    </location>
</feature>
<feature type="zinc finger region" description="C3H1-type 1" evidence="3">
    <location>
        <begin position="12"/>
        <end position="40"/>
    </location>
</feature>
<feature type="zinc finger region" description="C3H1-type 2" evidence="3">
    <location>
        <begin position="149"/>
        <end position="176"/>
    </location>
</feature>
<feature type="region of interest" description="Disordered" evidence="4">
    <location>
        <begin position="186"/>
        <end position="220"/>
    </location>
</feature>
<feature type="compositionally biased region" description="Basic residues" evidence="4">
    <location>
        <begin position="189"/>
        <end position="220"/>
    </location>
</feature>
<feature type="modified residue" description="N-acetylalanine" evidence="1">
    <location>
        <position position="2"/>
    </location>
</feature>
<feature type="splice variant" id="VSP_056874" description="In isoform 4." evidence="6">
    <original>TADGSHCHVSDVEVQEHYDNFFEEVFTELQEKYGEIEEMNVCDNLGDHLVGNVYVKFRREEDAERAVAELNNRWFNGQAVHAE</original>
    <variation>ASELHNIICSTQEPPPPVPPPIKVKKFVNQGLWFPSTPTPKKGCKPTTVSAEELGASLGSGSALVSRGCFNTCNLRLSILGAF</variation>
    <location>
        <begin position="61"/>
        <end position="143"/>
    </location>
</feature>
<feature type="splice variant" id="VSP_056875" description="In isoform 3." evidence="6">
    <original>FRREEDAERAVAELNNRWFNGQAVHAELSPVTDFRESCCRQYEMGECTRGGFCNFMHLRPISRNLRRQLYGRGPRHRSPPRSHTGHRPRERNRRRSPDHRHGRF</original>
    <variation>VTSKVPHRSPSPRKEPTSFPRPPAWSLLRRVPLLSTQGHRCSCPASLFKVPFTLQSQHPQASELHNIICSTQEPPPPVPPPIKVKKFVNQGLWFPSTPTPKKGCKPTTVSAEELGASLGSGSALVSRGCFNTCNLRLSILGAF</variation>
    <location>
        <begin position="117"/>
        <end position="220"/>
    </location>
</feature>
<feature type="splice variant" id="VSP_056876" description="In isoform 4.">
    <location>
        <begin position="144"/>
        <end position="220"/>
    </location>
</feature>
<feature type="splice variant" id="VSP_056877" description="In isoform 2.">
    <location>
        <begin position="162"/>
        <end position="193"/>
    </location>
</feature>
<feature type="mutagenesis site" description="Does not impair nuclear localization." evidence="7">
    <original>P</original>
    <variation>A</variation>
    <location>
        <position position="190"/>
    </location>
</feature>
<feature type="mutagenesis site" description="Does not impair nuclear localization." evidence="7">
    <original>P</original>
    <variation>A</variation>
    <location>
        <position position="195"/>
    </location>
</feature>
<feature type="mutagenesis site" description="Does not impair nuclear localization." evidence="7">
    <original>P</original>
    <variation>A</variation>
    <location>
        <position position="196"/>
    </location>
</feature>
<gene>
    <name type="primary">U2af1l4</name>
    <name type="synonym">U2af26</name>
</gene>
<protein>
    <recommendedName>
        <fullName>Splicing factor U2AF 26 kDa subunit</fullName>
    </recommendedName>
    <alternativeName>
        <fullName>U2 auxiliary factor 26</fullName>
    </alternativeName>
    <alternativeName>
        <fullName>U2 small nuclear RNA auxiliary factor 1-like protein 4</fullName>
        <shortName evidence="9">U2AF1-like 4</shortName>
    </alternativeName>
</protein>
<accession>Q8BGJ9</accession>
<reference key="1">
    <citation type="journal article" date="2002" name="Mol. Cell. Biol.">
        <title>Characterization of U2AF(6), a splicing factor related to U2AF(35).</title>
        <authorList>
            <person name="Shepard J."/>
            <person name="Reick M."/>
            <person name="Olson S."/>
            <person name="Graveley B.R."/>
        </authorList>
    </citation>
    <scope>NUCLEOTIDE SEQUENCE [GENOMIC DNA / MRNA] (ISOFORM 1)</scope>
    <scope>FUNCTION</scope>
    <scope>RNA-BINDING</scope>
    <scope>INTERACTION WITH U2AF2</scope>
    <scope>SUBCELLULAR LOCATION</scope>
    <scope>TISSUE SPECIFICITY</scope>
    <source>
        <strain>129/SvEvTacfBr</strain>
        <strain>C57BL/6J</strain>
        <tissue>Brain</tissue>
    </source>
</reference>
<reference key="2">
    <citation type="journal article" date="2005" name="Science">
        <title>The transcriptional landscape of the mammalian genome.</title>
        <authorList>
            <person name="Carninci P."/>
            <person name="Kasukawa T."/>
            <person name="Katayama S."/>
            <person name="Gough J."/>
            <person name="Frith M.C."/>
            <person name="Maeda N."/>
            <person name="Oyama R."/>
            <person name="Ravasi T."/>
            <person name="Lenhard B."/>
            <person name="Wells C."/>
            <person name="Kodzius R."/>
            <person name="Shimokawa K."/>
            <person name="Bajic V.B."/>
            <person name="Brenner S.E."/>
            <person name="Batalov S."/>
            <person name="Forrest A.R."/>
            <person name="Zavolan M."/>
            <person name="Davis M.J."/>
            <person name="Wilming L.G."/>
            <person name="Aidinis V."/>
            <person name="Allen J.E."/>
            <person name="Ambesi-Impiombato A."/>
            <person name="Apweiler R."/>
            <person name="Aturaliya R.N."/>
            <person name="Bailey T.L."/>
            <person name="Bansal M."/>
            <person name="Baxter L."/>
            <person name="Beisel K.W."/>
            <person name="Bersano T."/>
            <person name="Bono H."/>
            <person name="Chalk A.M."/>
            <person name="Chiu K.P."/>
            <person name="Choudhary V."/>
            <person name="Christoffels A."/>
            <person name="Clutterbuck D.R."/>
            <person name="Crowe M.L."/>
            <person name="Dalla E."/>
            <person name="Dalrymple B.P."/>
            <person name="de Bono B."/>
            <person name="Della Gatta G."/>
            <person name="di Bernardo D."/>
            <person name="Down T."/>
            <person name="Engstrom P."/>
            <person name="Fagiolini M."/>
            <person name="Faulkner G."/>
            <person name="Fletcher C.F."/>
            <person name="Fukushima T."/>
            <person name="Furuno M."/>
            <person name="Futaki S."/>
            <person name="Gariboldi M."/>
            <person name="Georgii-Hemming P."/>
            <person name="Gingeras T.R."/>
            <person name="Gojobori T."/>
            <person name="Green R.E."/>
            <person name="Gustincich S."/>
            <person name="Harbers M."/>
            <person name="Hayashi Y."/>
            <person name="Hensch T.K."/>
            <person name="Hirokawa N."/>
            <person name="Hill D."/>
            <person name="Huminiecki L."/>
            <person name="Iacono M."/>
            <person name="Ikeo K."/>
            <person name="Iwama A."/>
            <person name="Ishikawa T."/>
            <person name="Jakt M."/>
            <person name="Kanapin A."/>
            <person name="Katoh M."/>
            <person name="Kawasawa Y."/>
            <person name="Kelso J."/>
            <person name="Kitamura H."/>
            <person name="Kitano H."/>
            <person name="Kollias G."/>
            <person name="Krishnan S.P."/>
            <person name="Kruger A."/>
            <person name="Kummerfeld S.K."/>
            <person name="Kurochkin I.V."/>
            <person name="Lareau L.F."/>
            <person name="Lazarevic D."/>
            <person name="Lipovich L."/>
            <person name="Liu J."/>
            <person name="Liuni S."/>
            <person name="McWilliam S."/>
            <person name="Madan Babu M."/>
            <person name="Madera M."/>
            <person name="Marchionni L."/>
            <person name="Matsuda H."/>
            <person name="Matsuzawa S."/>
            <person name="Miki H."/>
            <person name="Mignone F."/>
            <person name="Miyake S."/>
            <person name="Morris K."/>
            <person name="Mottagui-Tabar S."/>
            <person name="Mulder N."/>
            <person name="Nakano N."/>
            <person name="Nakauchi H."/>
            <person name="Ng P."/>
            <person name="Nilsson R."/>
            <person name="Nishiguchi S."/>
            <person name="Nishikawa S."/>
            <person name="Nori F."/>
            <person name="Ohara O."/>
            <person name="Okazaki Y."/>
            <person name="Orlando V."/>
            <person name="Pang K.C."/>
            <person name="Pavan W.J."/>
            <person name="Pavesi G."/>
            <person name="Pesole G."/>
            <person name="Petrovsky N."/>
            <person name="Piazza S."/>
            <person name="Reed J."/>
            <person name="Reid J.F."/>
            <person name="Ring B.Z."/>
            <person name="Ringwald M."/>
            <person name="Rost B."/>
            <person name="Ruan Y."/>
            <person name="Salzberg S.L."/>
            <person name="Sandelin A."/>
            <person name="Schneider C."/>
            <person name="Schoenbach C."/>
            <person name="Sekiguchi K."/>
            <person name="Semple C.A."/>
            <person name="Seno S."/>
            <person name="Sessa L."/>
            <person name="Sheng Y."/>
            <person name="Shibata Y."/>
            <person name="Shimada H."/>
            <person name="Shimada K."/>
            <person name="Silva D."/>
            <person name="Sinclair B."/>
            <person name="Sperling S."/>
            <person name="Stupka E."/>
            <person name="Sugiura K."/>
            <person name="Sultana R."/>
            <person name="Takenaka Y."/>
            <person name="Taki K."/>
            <person name="Tammoja K."/>
            <person name="Tan S.L."/>
            <person name="Tang S."/>
            <person name="Taylor M.S."/>
            <person name="Tegner J."/>
            <person name="Teichmann S.A."/>
            <person name="Ueda H.R."/>
            <person name="van Nimwegen E."/>
            <person name="Verardo R."/>
            <person name="Wei C.L."/>
            <person name="Yagi K."/>
            <person name="Yamanishi H."/>
            <person name="Zabarovsky E."/>
            <person name="Zhu S."/>
            <person name="Zimmer A."/>
            <person name="Hide W."/>
            <person name="Bult C."/>
            <person name="Grimmond S.M."/>
            <person name="Teasdale R.D."/>
            <person name="Liu E.T."/>
            <person name="Brusic V."/>
            <person name="Quackenbush J."/>
            <person name="Wahlestedt C."/>
            <person name="Mattick J.S."/>
            <person name="Hume D.A."/>
            <person name="Kai C."/>
            <person name="Sasaki D."/>
            <person name="Tomaru Y."/>
            <person name="Fukuda S."/>
            <person name="Kanamori-Katayama M."/>
            <person name="Suzuki M."/>
            <person name="Aoki J."/>
            <person name="Arakawa T."/>
            <person name="Iida J."/>
            <person name="Imamura K."/>
            <person name="Itoh M."/>
            <person name="Kato T."/>
            <person name="Kawaji H."/>
            <person name="Kawagashira N."/>
            <person name="Kawashima T."/>
            <person name="Kojima M."/>
            <person name="Kondo S."/>
            <person name="Konno H."/>
            <person name="Nakano K."/>
            <person name="Ninomiya N."/>
            <person name="Nishio T."/>
            <person name="Okada M."/>
            <person name="Plessy C."/>
            <person name="Shibata K."/>
            <person name="Shiraki T."/>
            <person name="Suzuki S."/>
            <person name="Tagami M."/>
            <person name="Waki K."/>
            <person name="Watahiki A."/>
            <person name="Okamura-Oho Y."/>
            <person name="Suzuki H."/>
            <person name="Kawai J."/>
            <person name="Hayashizaki Y."/>
        </authorList>
    </citation>
    <scope>NUCLEOTIDE SEQUENCE [LARGE SCALE MRNA] (ISOFORM 1)</scope>
    <source>
        <strain>C57BL/6J</strain>
        <tissue>Embryonic head</tissue>
    </source>
</reference>
<reference key="3">
    <citation type="journal article" date="2004" name="Genome Res.">
        <title>The status, quality, and expansion of the NIH full-length cDNA project: the Mammalian Gene Collection (MGC).</title>
        <authorList>
            <consortium name="The MGC Project Team"/>
        </authorList>
    </citation>
    <scope>NUCLEOTIDE SEQUENCE [LARGE SCALE MRNA] (ISOFORM 1)</scope>
    <source>
        <tissue>Brain</tissue>
    </source>
</reference>
<reference key="4">
    <citation type="journal article" date="2006" name="Nat. Immunol.">
        <title>Auxiliary splice factor U2AF26 and transcription factor Gfi1 cooperate directly in regulating CD45 alternative splicing.</title>
        <authorList>
            <person name="Heyd F."/>
            <person name="ten Dam G."/>
            <person name="Moeroey T."/>
        </authorList>
    </citation>
    <scope>FUNCTION</scope>
    <scope>INTERACTION WITH GFI1 AND U2AF2</scope>
    <scope>INDUCTION</scope>
    <scope>SUBCELLULAR LOCATION (ISOFORM 1)</scope>
</reference>
<reference key="5">
    <citation type="journal article" date="2008" name="J. Biol. Chem.">
        <title>Differential isoform expression and interaction with the P32 regulatory protein controls the subcellular localization of the splicing factor U2AF26.</title>
        <authorList>
            <person name="Heyd F."/>
            <person name="Carmo-Fonseca M."/>
            <person name="Moroy T."/>
        </authorList>
    </citation>
    <scope>SUBCELLULAR LOCATION</scope>
    <scope>ALTERNATIVE SPLICING (ISOFORMS 2 AND 3)</scope>
    <scope>INTERACTION WITH C1QBP</scope>
    <scope>MUTAGENESIS OF PRO-190; PRO-195 AND PRO-196</scope>
</reference>
<reference key="6">
    <citation type="journal article" date="2014" name="Mol. Cell">
        <title>Rhythmic U2af26 alternative splicing controls PERIOD1 stability and the circadian clock in mice.</title>
        <authorList>
            <person name="Preussner M."/>
            <person name="Wilhelmi I."/>
            <person name="Schultz A.S."/>
            <person name="Finkernagel F."/>
            <person name="Michel M."/>
            <person name="Moeroey T."/>
            <person name="Heyd F."/>
        </authorList>
    </citation>
    <scope>ALTERNATIVE SPLICING (ISOFORMS 1; 3 AND 4)</scope>
    <scope>INDUCTION BY CIRCADIAN RHYTHM (ISOFORM 3)</scope>
    <scope>INTERACTION WITH PER1 (ISOFORM 3)</scope>
    <scope>DISRUPTION PHENOTYPE</scope>
    <scope>SUBCELLULAR LOCATION (ISOFORMS 1 AND 3)</scope>
</reference>
<sequence>MAEYLASIFGTEKDKVNCSFYFKIGACRHGDRCSRLHNKPTFSQTIVLLNLYRNPQNTAQTADGSHCHVSDVEVQEHYDNFFEEVFTELQEKYGEIEEMNVCDNLGDHLVGNVYVKFRREEDAERAVAELNNRWFNGQAVHAELSPVTDFRESCCRQYEMGECTRGGFCNFMHLRPISRNLRRQLYGRGPRHRSPPRSHTGHRPRERNRRRSPDHRHGRF</sequence>
<dbReference type="EMBL" id="AF419339">
    <property type="protein sequence ID" value="AAN63524.1"/>
    <property type="molecule type" value="mRNA"/>
</dbReference>
<dbReference type="EMBL" id="AF419340">
    <property type="protein sequence ID" value="AAN63525.1"/>
    <property type="molecule type" value="Genomic_DNA"/>
</dbReference>
<dbReference type="EMBL" id="AK160974">
    <property type="protein sequence ID" value="BAE36125.1"/>
    <property type="molecule type" value="mRNA"/>
</dbReference>
<dbReference type="EMBL" id="BC060972">
    <property type="protein sequence ID" value="AAH60972.1"/>
    <property type="molecule type" value="mRNA"/>
</dbReference>
<dbReference type="CCDS" id="CCDS21100.1">
    <molecule id="Q8BGJ9-1"/>
</dbReference>
<dbReference type="RefSeq" id="NP_739566.1">
    <molecule id="Q8BGJ9-1"/>
    <property type="nucleotide sequence ID" value="NM_170760.3"/>
</dbReference>
<dbReference type="SMR" id="Q8BGJ9"/>
<dbReference type="BioGRID" id="231367">
    <property type="interactions" value="6"/>
</dbReference>
<dbReference type="FunCoup" id="Q8BGJ9">
    <property type="interactions" value="2107"/>
</dbReference>
<dbReference type="IntAct" id="Q8BGJ9">
    <property type="interactions" value="2"/>
</dbReference>
<dbReference type="STRING" id="10090.ENSMUSP00000039406"/>
<dbReference type="GlyGen" id="Q8BGJ9">
    <property type="glycosylation" value="2 sites, 1 N-linked glycan (1 site), 1 O-linked glycan (1 site)"/>
</dbReference>
<dbReference type="iPTMnet" id="Q8BGJ9"/>
<dbReference type="PhosphoSitePlus" id="Q8BGJ9"/>
<dbReference type="SwissPalm" id="Q8BGJ9"/>
<dbReference type="jPOST" id="Q8BGJ9"/>
<dbReference type="PaxDb" id="10090-ENSMUSP00000039406"/>
<dbReference type="ProteomicsDB" id="298250">
    <molecule id="Q8BGJ9-1"/>
</dbReference>
<dbReference type="ProteomicsDB" id="298251">
    <molecule id="Q8BGJ9-2"/>
</dbReference>
<dbReference type="ProteomicsDB" id="298252">
    <molecule id="Q8BGJ9-3"/>
</dbReference>
<dbReference type="ProteomicsDB" id="298253">
    <molecule id="Q8BGJ9-4"/>
</dbReference>
<dbReference type="Pumba" id="Q8BGJ9"/>
<dbReference type="DNASU" id="233073"/>
<dbReference type="Ensembl" id="ENSMUST00000043273.16">
    <molecule id="Q8BGJ9-1"/>
    <property type="protein sequence ID" value="ENSMUSP00000039406.10"/>
    <property type="gene ID" value="ENSMUSG00000078765.12"/>
</dbReference>
<dbReference type="Ensembl" id="ENSMUST00000163654.8">
    <molecule id="Q8BGJ9-2"/>
    <property type="protein sequence ID" value="ENSMUSP00000131048.2"/>
    <property type="gene ID" value="ENSMUSG00000078765.12"/>
</dbReference>
<dbReference type="Ensembl" id="ENSMUST00000167042.8">
    <molecule id="Q8BGJ9-1"/>
    <property type="protein sequence ID" value="ENSMUSP00000128886.2"/>
    <property type="gene ID" value="ENSMUSG00000109378.2"/>
</dbReference>
<dbReference type="Ensembl" id="ENSMUST00000171912.8">
    <molecule id="Q8BGJ9-1"/>
    <property type="protein sequence ID" value="ENSMUSP00000130983.2"/>
    <property type="gene ID" value="ENSMUSG00000109378.2"/>
</dbReference>
<dbReference type="GeneID" id="233073"/>
<dbReference type="KEGG" id="mmu:233073"/>
<dbReference type="UCSC" id="uc009gfa.1">
    <molecule id="Q8BGJ9-1"/>
    <property type="organism name" value="mouse"/>
</dbReference>
<dbReference type="AGR" id="MGI:2678374"/>
<dbReference type="CTD" id="199746"/>
<dbReference type="MGI" id="MGI:2678374">
    <property type="gene designation" value="U2af1l4"/>
</dbReference>
<dbReference type="VEuPathDB" id="HostDB:ENSMUSG00000078765"/>
<dbReference type="VEuPathDB" id="HostDB:ENSMUSG00000109378"/>
<dbReference type="eggNOG" id="KOG2202">
    <property type="taxonomic scope" value="Eukaryota"/>
</dbReference>
<dbReference type="GeneTree" id="ENSGT00950000183152"/>
<dbReference type="InParanoid" id="Q8BGJ9"/>
<dbReference type="OMA" id="RNPRHHE"/>
<dbReference type="OrthoDB" id="423462at2759"/>
<dbReference type="PhylomeDB" id="Q8BGJ9"/>
<dbReference type="TreeFam" id="TF300143"/>
<dbReference type="Reactome" id="R-MMU-159236">
    <property type="pathway name" value="Transport of Mature mRNA derived from an Intron-Containing Transcript"/>
</dbReference>
<dbReference type="Reactome" id="R-MMU-72163">
    <property type="pathway name" value="mRNA Splicing - Major Pathway"/>
</dbReference>
<dbReference type="Reactome" id="R-MMU-72187">
    <property type="pathway name" value="mRNA 3'-end processing"/>
</dbReference>
<dbReference type="Reactome" id="R-MMU-73856">
    <property type="pathway name" value="RNA Polymerase II Transcription Termination"/>
</dbReference>
<dbReference type="BioGRID-ORCS" id="233073">
    <property type="hits" value="0 hits in 76 CRISPR screens"/>
</dbReference>
<dbReference type="ChiTaRS" id="U2af1l4">
    <property type="organism name" value="mouse"/>
</dbReference>
<dbReference type="PRO" id="PR:Q8BGJ9"/>
<dbReference type="Proteomes" id="UP000000589">
    <property type="component" value="Chromosome 7"/>
</dbReference>
<dbReference type="RNAct" id="Q8BGJ9">
    <property type="molecule type" value="protein"/>
</dbReference>
<dbReference type="Bgee" id="ENSMUSG00000078765">
    <property type="expression patterns" value="Expressed in primary oocyte and 63 other cell types or tissues"/>
</dbReference>
<dbReference type="ExpressionAtlas" id="Q8BGJ9">
    <property type="expression patterns" value="baseline and differential"/>
</dbReference>
<dbReference type="GO" id="GO:0005737">
    <property type="term" value="C:cytoplasm"/>
    <property type="evidence" value="ECO:0007669"/>
    <property type="project" value="UniProtKB-SubCell"/>
</dbReference>
<dbReference type="GO" id="GO:0016607">
    <property type="term" value="C:nuclear speck"/>
    <property type="evidence" value="ECO:0007669"/>
    <property type="project" value="UniProtKB-SubCell"/>
</dbReference>
<dbReference type="GO" id="GO:0005681">
    <property type="term" value="C:spliceosomal complex"/>
    <property type="evidence" value="ECO:0007669"/>
    <property type="project" value="UniProtKB-KW"/>
</dbReference>
<dbReference type="GO" id="GO:0089701">
    <property type="term" value="C:U2AF complex"/>
    <property type="evidence" value="ECO:0007669"/>
    <property type="project" value="InterPro"/>
</dbReference>
<dbReference type="GO" id="GO:0003723">
    <property type="term" value="F:RNA binding"/>
    <property type="evidence" value="ECO:0007669"/>
    <property type="project" value="UniProtKB-KW"/>
</dbReference>
<dbReference type="GO" id="GO:0008270">
    <property type="term" value="F:zinc ion binding"/>
    <property type="evidence" value="ECO:0007669"/>
    <property type="project" value="UniProtKB-KW"/>
</dbReference>
<dbReference type="GO" id="GO:0000398">
    <property type="term" value="P:mRNA splicing, via spliceosome"/>
    <property type="evidence" value="ECO:0007669"/>
    <property type="project" value="InterPro"/>
</dbReference>
<dbReference type="GO" id="GO:0048511">
    <property type="term" value="P:rhythmic process"/>
    <property type="evidence" value="ECO:0007669"/>
    <property type="project" value="UniProtKB-KW"/>
</dbReference>
<dbReference type="CDD" id="cd12538">
    <property type="entry name" value="RRM_U2AF35"/>
    <property type="match status" value="1"/>
</dbReference>
<dbReference type="FunFam" id="3.30.70.330:FF:000055">
    <property type="entry name" value="Splicing factor U2AF 35 kDa subunit"/>
    <property type="match status" value="1"/>
</dbReference>
<dbReference type="Gene3D" id="3.30.70.330">
    <property type="match status" value="1"/>
</dbReference>
<dbReference type="InterPro" id="IPR012677">
    <property type="entry name" value="Nucleotide-bd_a/b_plait_sf"/>
</dbReference>
<dbReference type="InterPro" id="IPR035979">
    <property type="entry name" value="RBD_domain_sf"/>
</dbReference>
<dbReference type="InterPro" id="IPR000504">
    <property type="entry name" value="RRM_dom"/>
</dbReference>
<dbReference type="InterPro" id="IPR003954">
    <property type="entry name" value="RRM_dom_euk"/>
</dbReference>
<dbReference type="InterPro" id="IPR009145">
    <property type="entry name" value="U2AF_small"/>
</dbReference>
<dbReference type="InterPro" id="IPR000571">
    <property type="entry name" value="Znf_CCCH"/>
</dbReference>
<dbReference type="PANTHER" id="PTHR12620">
    <property type="entry name" value="U2 SNRNP AUXILIARY FACTOR, SMALL SUBUNIT"/>
    <property type="match status" value="1"/>
</dbReference>
<dbReference type="Pfam" id="PF00076">
    <property type="entry name" value="RRM_1"/>
    <property type="match status" value="1"/>
</dbReference>
<dbReference type="Pfam" id="PF00642">
    <property type="entry name" value="zf-CCCH"/>
    <property type="match status" value="2"/>
</dbReference>
<dbReference type="PRINTS" id="PR01848">
    <property type="entry name" value="U2AUXFACTOR"/>
</dbReference>
<dbReference type="SMART" id="SM00360">
    <property type="entry name" value="RRM"/>
    <property type="match status" value="1"/>
</dbReference>
<dbReference type="SMART" id="SM00361">
    <property type="entry name" value="RRM_1"/>
    <property type="match status" value="1"/>
</dbReference>
<dbReference type="SMART" id="SM00356">
    <property type="entry name" value="ZnF_C3H1"/>
    <property type="match status" value="2"/>
</dbReference>
<dbReference type="SUPFAM" id="SSF54928">
    <property type="entry name" value="RNA-binding domain, RBD"/>
    <property type="match status" value="1"/>
</dbReference>
<dbReference type="PROSITE" id="PS50102">
    <property type="entry name" value="RRM"/>
    <property type="match status" value="1"/>
</dbReference>
<dbReference type="PROSITE" id="PS50103">
    <property type="entry name" value="ZF_C3H1"/>
    <property type="match status" value="2"/>
</dbReference>
<evidence type="ECO:0000250" key="1">
    <source>
        <dbReference type="UniProtKB" id="Q8WU68"/>
    </source>
</evidence>
<evidence type="ECO:0000255" key="2">
    <source>
        <dbReference type="PROSITE-ProRule" id="PRU00176"/>
    </source>
</evidence>
<evidence type="ECO:0000255" key="3">
    <source>
        <dbReference type="PROSITE-ProRule" id="PRU00723"/>
    </source>
</evidence>
<evidence type="ECO:0000256" key="4">
    <source>
        <dbReference type="SAM" id="MobiDB-lite"/>
    </source>
</evidence>
<evidence type="ECO:0000269" key="5">
    <source>
    </source>
</evidence>
<evidence type="ECO:0000269" key="6">
    <source>
    </source>
</evidence>
<evidence type="ECO:0000269" key="7">
    <source>
    </source>
</evidence>
<evidence type="ECO:0000269" key="8">
    <source>
    </source>
</evidence>
<evidence type="ECO:0000303" key="9">
    <source>
    </source>
</evidence>
<evidence type="ECO:0000303" key="10">
    <source>
    </source>
</evidence>
<evidence type="ECO:0000305" key="11"/>
<evidence type="ECO:0000305" key="12">
    <source>
    </source>
</evidence>
<keyword id="KW-0007">Acetylation</keyword>
<keyword id="KW-0025">Alternative splicing</keyword>
<keyword id="KW-0090">Biological rhythms</keyword>
<keyword id="KW-0963">Cytoplasm</keyword>
<keyword id="KW-0479">Metal-binding</keyword>
<keyword id="KW-0507">mRNA processing</keyword>
<keyword id="KW-0508">mRNA splicing</keyword>
<keyword id="KW-0539">Nucleus</keyword>
<keyword id="KW-1185">Reference proteome</keyword>
<keyword id="KW-0677">Repeat</keyword>
<keyword id="KW-0694">RNA-binding</keyword>
<keyword id="KW-0747">Spliceosome</keyword>
<keyword id="KW-0862">Zinc</keyword>
<keyword id="KW-0863">Zinc-finger</keyword>